<organism>
    <name type="scientific">Francisella tularensis subsp. tularensis (strain SCHU S4 / Schu 4)</name>
    <dbReference type="NCBI Taxonomy" id="177416"/>
    <lineage>
        <taxon>Bacteria</taxon>
        <taxon>Pseudomonadati</taxon>
        <taxon>Pseudomonadota</taxon>
        <taxon>Gammaproteobacteria</taxon>
        <taxon>Thiotrichales</taxon>
        <taxon>Francisellaceae</taxon>
        <taxon>Francisella</taxon>
    </lineage>
</organism>
<comment type="function">
    <text evidence="1">With S4 and S12 plays an important role in translational accuracy.</text>
</comment>
<comment type="function">
    <text evidence="1">Located at the back of the 30S subunit body where it stabilizes the conformation of the head with respect to the body.</text>
</comment>
<comment type="subunit">
    <text evidence="1">Part of the 30S ribosomal subunit. Contacts proteins S4 and S8.</text>
</comment>
<comment type="domain">
    <text>The N-terminal domain interacts with the head of the 30S subunit; the C-terminal domain interacts with the body and contacts protein S4. The interaction surface between S4 and S5 is involved in control of translational fidelity.</text>
</comment>
<comment type="similarity">
    <text evidence="1">Belongs to the universal ribosomal protein uS5 family.</text>
</comment>
<dbReference type="EMBL" id="AJ749949">
    <property type="protein sequence ID" value="CAG44975.1"/>
    <property type="molecule type" value="Genomic_DNA"/>
</dbReference>
<dbReference type="RefSeq" id="WP_003021588.1">
    <property type="nucleotide sequence ID" value="NZ_CP010290.1"/>
</dbReference>
<dbReference type="RefSeq" id="YP_169391.1">
    <property type="nucleotide sequence ID" value="NC_006570.2"/>
</dbReference>
<dbReference type="SMR" id="Q5NHV1"/>
<dbReference type="STRING" id="177416.FTT_0342"/>
<dbReference type="DNASU" id="3191972"/>
<dbReference type="EnsemblBacteria" id="CAG44975">
    <property type="protein sequence ID" value="CAG44975"/>
    <property type="gene ID" value="FTT_0342"/>
</dbReference>
<dbReference type="GeneID" id="75264244"/>
<dbReference type="KEGG" id="ftu:FTT_0342"/>
<dbReference type="eggNOG" id="COG0098">
    <property type="taxonomic scope" value="Bacteria"/>
</dbReference>
<dbReference type="OrthoDB" id="9809045at2"/>
<dbReference type="Proteomes" id="UP000001174">
    <property type="component" value="Chromosome"/>
</dbReference>
<dbReference type="GO" id="GO:0015935">
    <property type="term" value="C:small ribosomal subunit"/>
    <property type="evidence" value="ECO:0007669"/>
    <property type="project" value="InterPro"/>
</dbReference>
<dbReference type="GO" id="GO:0019843">
    <property type="term" value="F:rRNA binding"/>
    <property type="evidence" value="ECO:0007669"/>
    <property type="project" value="UniProtKB-UniRule"/>
</dbReference>
<dbReference type="GO" id="GO:0003735">
    <property type="term" value="F:structural constituent of ribosome"/>
    <property type="evidence" value="ECO:0007669"/>
    <property type="project" value="InterPro"/>
</dbReference>
<dbReference type="GO" id="GO:0006412">
    <property type="term" value="P:translation"/>
    <property type="evidence" value="ECO:0007669"/>
    <property type="project" value="UniProtKB-UniRule"/>
</dbReference>
<dbReference type="FunFam" id="3.30.160.20:FF:000001">
    <property type="entry name" value="30S ribosomal protein S5"/>
    <property type="match status" value="1"/>
</dbReference>
<dbReference type="FunFam" id="3.30.230.10:FF:000002">
    <property type="entry name" value="30S ribosomal protein S5"/>
    <property type="match status" value="1"/>
</dbReference>
<dbReference type="Gene3D" id="3.30.160.20">
    <property type="match status" value="1"/>
</dbReference>
<dbReference type="Gene3D" id="3.30.230.10">
    <property type="match status" value="1"/>
</dbReference>
<dbReference type="HAMAP" id="MF_01307_B">
    <property type="entry name" value="Ribosomal_uS5_B"/>
    <property type="match status" value="1"/>
</dbReference>
<dbReference type="InterPro" id="IPR020568">
    <property type="entry name" value="Ribosomal_Su5_D2-typ_SF"/>
</dbReference>
<dbReference type="InterPro" id="IPR000851">
    <property type="entry name" value="Ribosomal_uS5"/>
</dbReference>
<dbReference type="InterPro" id="IPR005712">
    <property type="entry name" value="Ribosomal_uS5_bac-type"/>
</dbReference>
<dbReference type="InterPro" id="IPR005324">
    <property type="entry name" value="Ribosomal_uS5_C"/>
</dbReference>
<dbReference type="InterPro" id="IPR013810">
    <property type="entry name" value="Ribosomal_uS5_N"/>
</dbReference>
<dbReference type="InterPro" id="IPR018192">
    <property type="entry name" value="Ribosomal_uS5_N_CS"/>
</dbReference>
<dbReference type="InterPro" id="IPR014721">
    <property type="entry name" value="Ribsml_uS5_D2-typ_fold_subgr"/>
</dbReference>
<dbReference type="NCBIfam" id="TIGR01021">
    <property type="entry name" value="rpsE_bact"/>
    <property type="match status" value="1"/>
</dbReference>
<dbReference type="PANTHER" id="PTHR48277">
    <property type="entry name" value="MITOCHONDRIAL RIBOSOMAL PROTEIN S5"/>
    <property type="match status" value="1"/>
</dbReference>
<dbReference type="PANTHER" id="PTHR48277:SF1">
    <property type="entry name" value="MITOCHONDRIAL RIBOSOMAL PROTEIN S5"/>
    <property type="match status" value="1"/>
</dbReference>
<dbReference type="Pfam" id="PF00333">
    <property type="entry name" value="Ribosomal_S5"/>
    <property type="match status" value="1"/>
</dbReference>
<dbReference type="Pfam" id="PF03719">
    <property type="entry name" value="Ribosomal_S5_C"/>
    <property type="match status" value="1"/>
</dbReference>
<dbReference type="SUPFAM" id="SSF54768">
    <property type="entry name" value="dsRNA-binding domain-like"/>
    <property type="match status" value="1"/>
</dbReference>
<dbReference type="SUPFAM" id="SSF54211">
    <property type="entry name" value="Ribosomal protein S5 domain 2-like"/>
    <property type="match status" value="1"/>
</dbReference>
<dbReference type="PROSITE" id="PS00585">
    <property type="entry name" value="RIBOSOMAL_S5"/>
    <property type="match status" value="1"/>
</dbReference>
<dbReference type="PROSITE" id="PS50881">
    <property type="entry name" value="S5_DSRBD"/>
    <property type="match status" value="1"/>
</dbReference>
<reference key="1">
    <citation type="journal article" date="2005" name="Nat. Genet.">
        <title>The complete genome sequence of Francisella tularensis, the causative agent of tularemia.</title>
        <authorList>
            <person name="Larsson P."/>
            <person name="Oyston P.C.F."/>
            <person name="Chain P."/>
            <person name="Chu M.C."/>
            <person name="Duffield M."/>
            <person name="Fuxelius H.-H."/>
            <person name="Garcia E."/>
            <person name="Haelltorp G."/>
            <person name="Johansson D."/>
            <person name="Isherwood K.E."/>
            <person name="Karp P.D."/>
            <person name="Larsson E."/>
            <person name="Liu Y."/>
            <person name="Michell S."/>
            <person name="Prior J."/>
            <person name="Prior R."/>
            <person name="Malfatti S."/>
            <person name="Sjoestedt A."/>
            <person name="Svensson K."/>
            <person name="Thompson N."/>
            <person name="Vergez L."/>
            <person name="Wagg J.K."/>
            <person name="Wren B.W."/>
            <person name="Lindler L.E."/>
            <person name="Andersson S.G.E."/>
            <person name="Forsman M."/>
            <person name="Titball R.W."/>
        </authorList>
    </citation>
    <scope>NUCLEOTIDE SEQUENCE [LARGE SCALE GENOMIC DNA]</scope>
    <source>
        <strain>SCHU S4 / Schu 4</strain>
    </source>
</reference>
<keyword id="KW-1185">Reference proteome</keyword>
<keyword id="KW-0687">Ribonucleoprotein</keyword>
<keyword id="KW-0689">Ribosomal protein</keyword>
<keyword id="KW-0694">RNA-binding</keyword>
<keyword id="KW-0699">rRNA-binding</keyword>
<sequence>MSNEVKKNEELIEKLVSVKRHSKTVKGGRIMSFAALTVVGDGKGRIGVGRGKSREVPAAIQKAMENAKKNMVSVNLNNDTLWYPVMSNHGASKVFMQPASAGTGIIAGGAMRSVFEAVGVHNVLAKTYGSTNPANVVRATIAGLAKIKSPDEIAEKRGLSVEEIQG</sequence>
<protein>
    <recommendedName>
        <fullName evidence="1">Small ribosomal subunit protein uS5</fullName>
    </recommendedName>
    <alternativeName>
        <fullName evidence="2">30S ribosomal protein S5</fullName>
    </alternativeName>
</protein>
<evidence type="ECO:0000255" key="1">
    <source>
        <dbReference type="HAMAP-Rule" id="MF_01307"/>
    </source>
</evidence>
<evidence type="ECO:0000305" key="2"/>
<accession>Q5NHV1</accession>
<gene>
    <name evidence="1" type="primary">rpsE</name>
    <name type="ordered locus">FTT_0342</name>
</gene>
<feature type="chain" id="PRO_0000131516" description="Small ribosomal subunit protein uS5">
    <location>
        <begin position="1"/>
        <end position="166"/>
    </location>
</feature>
<feature type="domain" description="S5 DRBM" evidence="1">
    <location>
        <begin position="11"/>
        <end position="74"/>
    </location>
</feature>
<name>RS5_FRATT</name>
<proteinExistence type="inferred from homology"/>